<sequence length="159" mass="18615">MMMDILMYLFETYIHSDADLQVDQDELEDELLRAGFHQQDIYKALLWLEELAALQQSDAHSAISRCSAVSSTRVYSPKEMQRLDIECRGFLLFLEQINVLTTETREMVIDRVMGLETNEFELEDLKWIILMVLFNVPGNENAYTLMEELLYTKEQGILH</sequence>
<dbReference type="EMBL" id="BA000037">
    <property type="protein sequence ID" value="BAC95986.1"/>
    <property type="molecule type" value="Genomic_DNA"/>
</dbReference>
<dbReference type="RefSeq" id="WP_011079084.1">
    <property type="nucleotide sequence ID" value="NC_005139.1"/>
</dbReference>
<dbReference type="SMR" id="Q7MGK9"/>
<dbReference type="STRING" id="672.VV93_v1c29440"/>
<dbReference type="KEGG" id="vvy:VV3222"/>
<dbReference type="PATRIC" id="fig|196600.6.peg.3188"/>
<dbReference type="eggNOG" id="COG2922">
    <property type="taxonomic scope" value="Bacteria"/>
</dbReference>
<dbReference type="HOGENOM" id="CLU_133242_0_0_6"/>
<dbReference type="Proteomes" id="UP000002675">
    <property type="component" value="Chromosome I"/>
</dbReference>
<dbReference type="HAMAP" id="MF_00598">
    <property type="entry name" value="Smg"/>
    <property type="match status" value="1"/>
</dbReference>
<dbReference type="InterPro" id="IPR007456">
    <property type="entry name" value="Smg"/>
</dbReference>
<dbReference type="NCBIfam" id="NF002897">
    <property type="entry name" value="PRK03430.1"/>
    <property type="match status" value="1"/>
</dbReference>
<dbReference type="PANTHER" id="PTHR38692">
    <property type="entry name" value="PROTEIN SMG"/>
    <property type="match status" value="1"/>
</dbReference>
<dbReference type="PANTHER" id="PTHR38692:SF1">
    <property type="entry name" value="PROTEIN SMG"/>
    <property type="match status" value="1"/>
</dbReference>
<dbReference type="Pfam" id="PF04361">
    <property type="entry name" value="DUF494"/>
    <property type="match status" value="1"/>
</dbReference>
<comment type="similarity">
    <text evidence="1">Belongs to the Smg family.</text>
</comment>
<organism>
    <name type="scientific">Vibrio vulnificus (strain YJ016)</name>
    <dbReference type="NCBI Taxonomy" id="196600"/>
    <lineage>
        <taxon>Bacteria</taxon>
        <taxon>Pseudomonadati</taxon>
        <taxon>Pseudomonadota</taxon>
        <taxon>Gammaproteobacteria</taxon>
        <taxon>Vibrionales</taxon>
        <taxon>Vibrionaceae</taxon>
        <taxon>Vibrio</taxon>
    </lineage>
</organism>
<gene>
    <name evidence="1" type="primary">smg</name>
    <name type="ordered locus">VV3222</name>
</gene>
<accession>Q7MGK9</accession>
<evidence type="ECO:0000255" key="1">
    <source>
        <dbReference type="HAMAP-Rule" id="MF_00598"/>
    </source>
</evidence>
<protein>
    <recommendedName>
        <fullName evidence="1">Protein Smg homolog</fullName>
    </recommendedName>
</protein>
<name>SMG_VIBVY</name>
<proteinExistence type="inferred from homology"/>
<reference key="1">
    <citation type="journal article" date="2003" name="Genome Res.">
        <title>Comparative genome analysis of Vibrio vulnificus, a marine pathogen.</title>
        <authorList>
            <person name="Chen C.-Y."/>
            <person name="Wu K.-M."/>
            <person name="Chang Y.-C."/>
            <person name="Chang C.-H."/>
            <person name="Tsai H.-C."/>
            <person name="Liao T.-L."/>
            <person name="Liu Y.-M."/>
            <person name="Chen H.-J."/>
            <person name="Shen A.B.-T."/>
            <person name="Li J.-C."/>
            <person name="Su T.-L."/>
            <person name="Shao C.-P."/>
            <person name="Lee C.-T."/>
            <person name="Hor L.-I."/>
            <person name="Tsai S.-F."/>
        </authorList>
    </citation>
    <scope>NUCLEOTIDE SEQUENCE [LARGE SCALE GENOMIC DNA]</scope>
    <source>
        <strain>YJ016</strain>
    </source>
</reference>
<feature type="chain" id="PRO_0000209187" description="Protein Smg homolog">
    <location>
        <begin position="1"/>
        <end position="159"/>
    </location>
</feature>